<evidence type="ECO:0000255" key="1">
    <source>
        <dbReference type="PROSITE-ProRule" id="PRU00520"/>
    </source>
</evidence>
<evidence type="ECO:0000305" key="2"/>
<name>ACYP_CORGB</name>
<gene>
    <name type="primary">acyP</name>
    <name type="ordered locus">cgR_5035</name>
</gene>
<comment type="catalytic activity">
    <reaction>
        <text>an acyl phosphate + H2O = a carboxylate + phosphate + H(+)</text>
        <dbReference type="Rhea" id="RHEA:14965"/>
        <dbReference type="ChEBI" id="CHEBI:15377"/>
        <dbReference type="ChEBI" id="CHEBI:15378"/>
        <dbReference type="ChEBI" id="CHEBI:29067"/>
        <dbReference type="ChEBI" id="CHEBI:43474"/>
        <dbReference type="ChEBI" id="CHEBI:59918"/>
        <dbReference type="EC" id="3.6.1.7"/>
    </reaction>
</comment>
<comment type="similarity">
    <text evidence="2">Belongs to the acylphosphatase family.</text>
</comment>
<keyword id="KW-0378">Hydrolase</keyword>
<proteinExistence type="inferred from homology"/>
<accession>A4QFD3</accession>
<reference key="1">
    <citation type="journal article" date="2007" name="Microbiology">
        <title>Comparative analysis of the Corynebacterium glutamicum group and complete genome sequence of strain R.</title>
        <authorList>
            <person name="Yukawa H."/>
            <person name="Omumasaba C.A."/>
            <person name="Nonaka H."/>
            <person name="Kos P."/>
            <person name="Okai N."/>
            <person name="Suzuki N."/>
            <person name="Suda M."/>
            <person name="Tsuge Y."/>
            <person name="Watanabe J."/>
            <person name="Ikeda Y."/>
            <person name="Vertes A.A."/>
            <person name="Inui M."/>
        </authorList>
    </citation>
    <scope>NUCLEOTIDE SEQUENCE [LARGE SCALE GENOMIC DNA]</scope>
    <source>
        <strain>R</strain>
    </source>
</reference>
<organism>
    <name type="scientific">Corynebacterium glutamicum (strain R)</name>
    <dbReference type="NCBI Taxonomy" id="340322"/>
    <lineage>
        <taxon>Bacteria</taxon>
        <taxon>Bacillati</taxon>
        <taxon>Actinomycetota</taxon>
        <taxon>Actinomycetes</taxon>
        <taxon>Mycobacteriales</taxon>
        <taxon>Corynebacteriaceae</taxon>
        <taxon>Corynebacterium</taxon>
    </lineage>
</organism>
<feature type="chain" id="PRO_0000326692" description="Acylphosphatase">
    <location>
        <begin position="1"/>
        <end position="94"/>
    </location>
</feature>
<feature type="domain" description="Acylphosphatase-like" evidence="1">
    <location>
        <begin position="5"/>
        <end position="94"/>
    </location>
</feature>
<feature type="active site" evidence="1">
    <location>
        <position position="20"/>
    </location>
</feature>
<feature type="active site" evidence="1">
    <location>
        <position position="38"/>
    </location>
</feature>
<dbReference type="EC" id="3.6.1.7"/>
<dbReference type="EMBL" id="AP009044">
    <property type="protein sequence ID" value="BAF54949.1"/>
    <property type="molecule type" value="Genomic_DNA"/>
</dbReference>
<dbReference type="RefSeq" id="WP_011897509.1">
    <property type="nucleotide sequence ID" value="NC_009342.1"/>
</dbReference>
<dbReference type="SMR" id="A4QFD3"/>
<dbReference type="KEGG" id="cgt:cgR_5035"/>
<dbReference type="HOGENOM" id="CLU_141932_3_0_11"/>
<dbReference type="PhylomeDB" id="A4QFD3"/>
<dbReference type="Proteomes" id="UP000006698">
    <property type="component" value="Chromosome"/>
</dbReference>
<dbReference type="GO" id="GO:0003998">
    <property type="term" value="F:acylphosphatase activity"/>
    <property type="evidence" value="ECO:0007669"/>
    <property type="project" value="UniProtKB-EC"/>
</dbReference>
<dbReference type="Gene3D" id="3.30.70.100">
    <property type="match status" value="1"/>
</dbReference>
<dbReference type="InterPro" id="IPR020456">
    <property type="entry name" value="Acylphosphatase"/>
</dbReference>
<dbReference type="InterPro" id="IPR001792">
    <property type="entry name" value="Acylphosphatase-like_dom"/>
</dbReference>
<dbReference type="InterPro" id="IPR036046">
    <property type="entry name" value="Acylphosphatase-like_dom_sf"/>
</dbReference>
<dbReference type="InterPro" id="IPR017968">
    <property type="entry name" value="Acylphosphatase_CS"/>
</dbReference>
<dbReference type="NCBIfam" id="NF010997">
    <property type="entry name" value="PRK14422.1"/>
    <property type="match status" value="1"/>
</dbReference>
<dbReference type="PANTHER" id="PTHR47268">
    <property type="entry name" value="ACYLPHOSPHATASE"/>
    <property type="match status" value="1"/>
</dbReference>
<dbReference type="PANTHER" id="PTHR47268:SF4">
    <property type="entry name" value="ACYLPHOSPHATASE"/>
    <property type="match status" value="1"/>
</dbReference>
<dbReference type="Pfam" id="PF00708">
    <property type="entry name" value="Acylphosphatase"/>
    <property type="match status" value="1"/>
</dbReference>
<dbReference type="SUPFAM" id="SSF54975">
    <property type="entry name" value="Acylphosphatase/BLUF domain-like"/>
    <property type="match status" value="1"/>
</dbReference>
<dbReference type="PROSITE" id="PS00150">
    <property type="entry name" value="ACYLPHOSPHATASE_1"/>
    <property type="match status" value="1"/>
</dbReference>
<dbReference type="PROSITE" id="PS51160">
    <property type="entry name" value="ACYLPHOSPHATASE_3"/>
    <property type="match status" value="1"/>
</dbReference>
<sequence>MEKVRLTAFVHGHVQGVGFRWWTTSQAQELKLAGSASNLSDGRVCVVAEGPQTQCEELLRRLKENPSSYRRPGHVDTVIEQWGEPRDVEGFVER</sequence>
<protein>
    <recommendedName>
        <fullName>Acylphosphatase</fullName>
        <ecNumber>3.6.1.7</ecNumber>
    </recommendedName>
    <alternativeName>
        <fullName>Acylphosphate phosphohydrolase</fullName>
    </alternativeName>
</protein>